<proteinExistence type="inferred from homology"/>
<evidence type="ECO:0000255" key="1">
    <source>
        <dbReference type="HAMAP-Rule" id="MF_00323"/>
    </source>
</evidence>
<dbReference type="EC" id="4.98.1.1" evidence="1"/>
<dbReference type="EMBL" id="CP000095">
    <property type="protein sequence ID" value="AAZ59345.1"/>
    <property type="molecule type" value="Genomic_DNA"/>
</dbReference>
<dbReference type="RefSeq" id="WP_011294489.1">
    <property type="nucleotide sequence ID" value="NC_007335.2"/>
</dbReference>
<dbReference type="SMR" id="Q46GQ1"/>
<dbReference type="STRING" id="59920.PMN2A_1857"/>
<dbReference type="KEGG" id="pmn:PMN2A_1857"/>
<dbReference type="HOGENOM" id="CLU_018884_4_3_3"/>
<dbReference type="OrthoDB" id="9809741at2"/>
<dbReference type="PhylomeDB" id="Q46GQ1"/>
<dbReference type="UniPathway" id="UPA00252">
    <property type="reaction ID" value="UER00325"/>
</dbReference>
<dbReference type="Proteomes" id="UP000002535">
    <property type="component" value="Chromosome"/>
</dbReference>
<dbReference type="GO" id="GO:0005737">
    <property type="term" value="C:cytoplasm"/>
    <property type="evidence" value="ECO:0007669"/>
    <property type="project" value="UniProtKB-SubCell"/>
</dbReference>
<dbReference type="GO" id="GO:0004325">
    <property type="term" value="F:ferrochelatase activity"/>
    <property type="evidence" value="ECO:0007669"/>
    <property type="project" value="UniProtKB-UniRule"/>
</dbReference>
<dbReference type="GO" id="GO:0046872">
    <property type="term" value="F:metal ion binding"/>
    <property type="evidence" value="ECO:0007669"/>
    <property type="project" value="UniProtKB-KW"/>
</dbReference>
<dbReference type="GO" id="GO:0006783">
    <property type="term" value="P:heme biosynthetic process"/>
    <property type="evidence" value="ECO:0007669"/>
    <property type="project" value="UniProtKB-UniRule"/>
</dbReference>
<dbReference type="CDD" id="cd00419">
    <property type="entry name" value="Ferrochelatase_C"/>
    <property type="match status" value="1"/>
</dbReference>
<dbReference type="CDD" id="cd03411">
    <property type="entry name" value="Ferrochelatase_N"/>
    <property type="match status" value="1"/>
</dbReference>
<dbReference type="FunFam" id="3.40.50.1400:FF:000006">
    <property type="entry name" value="Ferrochelatase"/>
    <property type="match status" value="1"/>
</dbReference>
<dbReference type="Gene3D" id="3.40.50.1400">
    <property type="match status" value="2"/>
</dbReference>
<dbReference type="HAMAP" id="MF_00323">
    <property type="entry name" value="Ferrochelatase"/>
    <property type="match status" value="1"/>
</dbReference>
<dbReference type="InterPro" id="IPR001015">
    <property type="entry name" value="Ferrochelatase"/>
</dbReference>
<dbReference type="InterPro" id="IPR019772">
    <property type="entry name" value="Ferrochelatase_AS"/>
</dbReference>
<dbReference type="InterPro" id="IPR033644">
    <property type="entry name" value="Ferrochelatase_C"/>
</dbReference>
<dbReference type="InterPro" id="IPR033659">
    <property type="entry name" value="Ferrochelatase_N"/>
</dbReference>
<dbReference type="NCBIfam" id="TIGR00109">
    <property type="entry name" value="hemH"/>
    <property type="match status" value="1"/>
</dbReference>
<dbReference type="PANTHER" id="PTHR11108">
    <property type="entry name" value="FERROCHELATASE"/>
    <property type="match status" value="1"/>
</dbReference>
<dbReference type="PANTHER" id="PTHR11108:SF1">
    <property type="entry name" value="FERROCHELATASE, MITOCHONDRIAL"/>
    <property type="match status" value="1"/>
</dbReference>
<dbReference type="Pfam" id="PF00762">
    <property type="entry name" value="Ferrochelatase"/>
    <property type="match status" value="1"/>
</dbReference>
<dbReference type="SUPFAM" id="SSF53800">
    <property type="entry name" value="Chelatase"/>
    <property type="match status" value="1"/>
</dbReference>
<dbReference type="SUPFAM" id="SSF103511">
    <property type="entry name" value="Chlorophyll a-b binding protein"/>
    <property type="match status" value="1"/>
</dbReference>
<dbReference type="PROSITE" id="PS00534">
    <property type="entry name" value="FERROCHELATASE"/>
    <property type="match status" value="1"/>
</dbReference>
<gene>
    <name evidence="1" type="primary">hemH</name>
    <name type="ordered locus">PMN2A_1857</name>
</gene>
<feature type="chain" id="PRO_1000019341" description="Ferrochelatase">
    <location>
        <begin position="1"/>
        <end position="391"/>
    </location>
</feature>
<feature type="binding site" evidence="1">
    <location>
        <position position="196"/>
    </location>
    <ligand>
        <name>Fe cation</name>
        <dbReference type="ChEBI" id="CHEBI:24875"/>
    </ligand>
</feature>
<feature type="binding site" evidence="1">
    <location>
        <position position="281"/>
    </location>
    <ligand>
        <name>Fe cation</name>
        <dbReference type="ChEBI" id="CHEBI:24875"/>
    </ligand>
</feature>
<comment type="function">
    <text evidence="1">Catalyzes the ferrous insertion into protoporphyrin IX.</text>
</comment>
<comment type="catalytic activity">
    <reaction evidence="1">
        <text>heme b + 2 H(+) = protoporphyrin IX + Fe(2+)</text>
        <dbReference type="Rhea" id="RHEA:22584"/>
        <dbReference type="ChEBI" id="CHEBI:15378"/>
        <dbReference type="ChEBI" id="CHEBI:29033"/>
        <dbReference type="ChEBI" id="CHEBI:57306"/>
        <dbReference type="ChEBI" id="CHEBI:60344"/>
        <dbReference type="EC" id="4.98.1.1"/>
    </reaction>
</comment>
<comment type="pathway">
    <text evidence="1">Porphyrin-containing compound metabolism; protoheme biosynthesis; protoheme from protoporphyrin-IX: step 1/1.</text>
</comment>
<comment type="subcellular location">
    <subcellularLocation>
        <location evidence="1">Cytoplasm</location>
    </subcellularLocation>
</comment>
<comment type="similarity">
    <text evidence="1">Belongs to the ferrochelatase family.</text>
</comment>
<keyword id="KW-0963">Cytoplasm</keyword>
<keyword id="KW-0350">Heme biosynthesis</keyword>
<keyword id="KW-0408">Iron</keyword>
<keyword id="KW-0456">Lyase</keyword>
<keyword id="KW-0479">Metal-binding</keyword>
<keyword id="KW-0627">Porphyrin biosynthesis</keyword>
<keyword id="KW-1185">Reference proteome</keyword>
<name>HEMH_PROMT</name>
<accession>Q46GQ1</accession>
<sequence>MARVGVLLLNLGGPERIKDVGPFLYNLFSDPEIIRLPVRAFQKPLAWLISLLRSSKSQEAYRSIGGGSPLRRITEQQARELQSYLRNIGIDATTYVAMRYWHPFTESAVADMKADGVSEVVVLPLYPHFSISTSGSSFRELKRLKDGDDEFAELSIRCIRSWFDHPAYVSSMAELIKKQILACDLPQESHVFFTAHGVPKSYVEEAGDPYQDQIQNCSLLIIDQLENSLGFTNSFSLAYQSRVGPEEWLKPYTEEVLEKLGKSGVKELVVVPISFVSEHIETLQEIDIEYKEIAQKNGIVNFKRVPALDVYPLFIEGLADLVSSCLNGEGISLEEASKLPERVKLYPQEKWQWGWNNSSEVWNGRVAMIVFLSFLMELIIGGGPLHQIGLL</sequence>
<reference key="1">
    <citation type="journal article" date="2007" name="PLoS Genet.">
        <title>Patterns and implications of gene gain and loss in the evolution of Prochlorococcus.</title>
        <authorList>
            <person name="Kettler G.C."/>
            <person name="Martiny A.C."/>
            <person name="Huang K."/>
            <person name="Zucker J."/>
            <person name="Coleman M.L."/>
            <person name="Rodrigue S."/>
            <person name="Chen F."/>
            <person name="Lapidus A."/>
            <person name="Ferriera S."/>
            <person name="Johnson J."/>
            <person name="Steglich C."/>
            <person name="Church G.M."/>
            <person name="Richardson P."/>
            <person name="Chisholm S.W."/>
        </authorList>
    </citation>
    <scope>NUCLEOTIDE SEQUENCE [LARGE SCALE GENOMIC DNA]</scope>
    <source>
        <strain>NATL2A</strain>
    </source>
</reference>
<organism>
    <name type="scientific">Prochlorococcus marinus (strain NATL2A)</name>
    <dbReference type="NCBI Taxonomy" id="59920"/>
    <lineage>
        <taxon>Bacteria</taxon>
        <taxon>Bacillati</taxon>
        <taxon>Cyanobacteriota</taxon>
        <taxon>Cyanophyceae</taxon>
        <taxon>Synechococcales</taxon>
        <taxon>Prochlorococcaceae</taxon>
        <taxon>Prochlorococcus</taxon>
    </lineage>
</organism>
<protein>
    <recommendedName>
        <fullName evidence="1">Ferrochelatase</fullName>
        <ecNumber evidence="1">4.98.1.1</ecNumber>
    </recommendedName>
    <alternativeName>
        <fullName evidence="1">Heme synthase</fullName>
    </alternativeName>
    <alternativeName>
        <fullName evidence="1">Protoheme ferro-lyase</fullName>
    </alternativeName>
</protein>